<sequence>MQAKAILRHTPTSPRKMRLVAGLVRGKAVDQAKAILLNSTKAASRNALQTLKSAVANYAQLNPDERVGDQELFVKSVFVDEGATLKRMLPAPMGRAYRVRKRSNHLTIVVDRVKNPETK</sequence>
<comment type="function">
    <text evidence="1">This protein binds specifically to 23S rRNA; its binding is stimulated by other ribosomal proteins, e.g. L4, L17, and L20. It is important during the early stages of 50S assembly. It makes multiple contacts with different domains of the 23S rRNA in the assembled 50S subunit and ribosome (By similarity).</text>
</comment>
<comment type="function">
    <text evidence="1">The globular domain of the protein is located near the polypeptide exit tunnel on the outside of the subunit, while an extended beta-hairpin is found that lines the wall of the exit tunnel in the center of the 70S ribosome.</text>
</comment>
<comment type="subunit">
    <text evidence="1">Part of the 50S ribosomal subunit.</text>
</comment>
<comment type="similarity">
    <text evidence="1">Belongs to the universal ribosomal protein uL22 family.</text>
</comment>
<organism>
    <name type="scientific">Chlorobium phaeovibrioides (strain DSM 265 / 1930)</name>
    <name type="common">Prosthecochloris vibrioformis (strain DSM 265)</name>
    <dbReference type="NCBI Taxonomy" id="290318"/>
    <lineage>
        <taxon>Bacteria</taxon>
        <taxon>Pseudomonadati</taxon>
        <taxon>Chlorobiota</taxon>
        <taxon>Chlorobiia</taxon>
        <taxon>Chlorobiales</taxon>
        <taxon>Chlorobiaceae</taxon>
        <taxon>Chlorobium/Pelodictyon group</taxon>
        <taxon>Chlorobium</taxon>
    </lineage>
</organism>
<feature type="chain" id="PRO_1000086562" description="Large ribosomal subunit protein uL22">
    <location>
        <begin position="1"/>
        <end position="119"/>
    </location>
</feature>
<gene>
    <name evidence="1" type="primary">rplV</name>
    <name type="ordered locus">Cvib_0251</name>
</gene>
<keyword id="KW-0687">Ribonucleoprotein</keyword>
<keyword id="KW-0689">Ribosomal protein</keyword>
<keyword id="KW-0694">RNA-binding</keyword>
<keyword id="KW-0699">rRNA-binding</keyword>
<name>RL22_CHLPM</name>
<protein>
    <recommendedName>
        <fullName evidence="1">Large ribosomal subunit protein uL22</fullName>
    </recommendedName>
    <alternativeName>
        <fullName evidence="2">50S ribosomal protein L22</fullName>
    </alternativeName>
</protein>
<accession>A4SCR4</accession>
<evidence type="ECO:0000255" key="1">
    <source>
        <dbReference type="HAMAP-Rule" id="MF_01331"/>
    </source>
</evidence>
<evidence type="ECO:0000305" key="2"/>
<reference key="1">
    <citation type="submission" date="2007-03" db="EMBL/GenBank/DDBJ databases">
        <title>Complete sequence of Prosthecochloris vibrioformis DSM 265.</title>
        <authorList>
            <consortium name="US DOE Joint Genome Institute"/>
            <person name="Copeland A."/>
            <person name="Lucas S."/>
            <person name="Lapidus A."/>
            <person name="Barry K."/>
            <person name="Detter J.C."/>
            <person name="Glavina del Rio T."/>
            <person name="Hammon N."/>
            <person name="Israni S."/>
            <person name="Pitluck S."/>
            <person name="Schmutz J."/>
            <person name="Larimer F."/>
            <person name="Land M."/>
            <person name="Hauser L."/>
            <person name="Mikhailova N."/>
            <person name="Li T."/>
            <person name="Overmann J."/>
            <person name="Schuster S.C."/>
            <person name="Bryant D.A."/>
            <person name="Richardson P."/>
        </authorList>
    </citation>
    <scope>NUCLEOTIDE SEQUENCE [LARGE SCALE GENOMIC DNA]</scope>
    <source>
        <strain>DSM 265 / 1930</strain>
    </source>
</reference>
<dbReference type="EMBL" id="CP000607">
    <property type="protein sequence ID" value="ABP36273.1"/>
    <property type="molecule type" value="Genomic_DNA"/>
</dbReference>
<dbReference type="SMR" id="A4SCR4"/>
<dbReference type="STRING" id="290318.Cvib_0251"/>
<dbReference type="KEGG" id="pvi:Cvib_0251"/>
<dbReference type="eggNOG" id="COG0091">
    <property type="taxonomic scope" value="Bacteria"/>
</dbReference>
<dbReference type="HOGENOM" id="CLU_083987_3_1_10"/>
<dbReference type="OrthoDB" id="9805969at2"/>
<dbReference type="GO" id="GO:0022625">
    <property type="term" value="C:cytosolic large ribosomal subunit"/>
    <property type="evidence" value="ECO:0007669"/>
    <property type="project" value="TreeGrafter"/>
</dbReference>
<dbReference type="GO" id="GO:0019843">
    <property type="term" value="F:rRNA binding"/>
    <property type="evidence" value="ECO:0007669"/>
    <property type="project" value="UniProtKB-UniRule"/>
</dbReference>
<dbReference type="GO" id="GO:0003735">
    <property type="term" value="F:structural constituent of ribosome"/>
    <property type="evidence" value="ECO:0007669"/>
    <property type="project" value="InterPro"/>
</dbReference>
<dbReference type="GO" id="GO:0006412">
    <property type="term" value="P:translation"/>
    <property type="evidence" value="ECO:0007669"/>
    <property type="project" value="UniProtKB-UniRule"/>
</dbReference>
<dbReference type="CDD" id="cd00336">
    <property type="entry name" value="Ribosomal_L22"/>
    <property type="match status" value="1"/>
</dbReference>
<dbReference type="Gene3D" id="3.90.470.10">
    <property type="entry name" value="Ribosomal protein L22/L17"/>
    <property type="match status" value="1"/>
</dbReference>
<dbReference type="HAMAP" id="MF_01331_B">
    <property type="entry name" value="Ribosomal_uL22_B"/>
    <property type="match status" value="1"/>
</dbReference>
<dbReference type="InterPro" id="IPR001063">
    <property type="entry name" value="Ribosomal_uL22"/>
</dbReference>
<dbReference type="InterPro" id="IPR005727">
    <property type="entry name" value="Ribosomal_uL22_bac/chlpt-type"/>
</dbReference>
<dbReference type="InterPro" id="IPR047867">
    <property type="entry name" value="Ribosomal_uL22_bac/org-type"/>
</dbReference>
<dbReference type="InterPro" id="IPR036394">
    <property type="entry name" value="Ribosomal_uL22_sf"/>
</dbReference>
<dbReference type="NCBIfam" id="TIGR01044">
    <property type="entry name" value="rplV_bact"/>
    <property type="match status" value="1"/>
</dbReference>
<dbReference type="PANTHER" id="PTHR13501">
    <property type="entry name" value="CHLOROPLAST 50S RIBOSOMAL PROTEIN L22-RELATED"/>
    <property type="match status" value="1"/>
</dbReference>
<dbReference type="PANTHER" id="PTHR13501:SF8">
    <property type="entry name" value="LARGE RIBOSOMAL SUBUNIT PROTEIN UL22M"/>
    <property type="match status" value="1"/>
</dbReference>
<dbReference type="Pfam" id="PF00237">
    <property type="entry name" value="Ribosomal_L22"/>
    <property type="match status" value="1"/>
</dbReference>
<dbReference type="SUPFAM" id="SSF54843">
    <property type="entry name" value="Ribosomal protein L22"/>
    <property type="match status" value="1"/>
</dbReference>
<proteinExistence type="inferred from homology"/>